<keyword id="KW-1185">Reference proteome</keyword>
<keyword id="KW-0687">Ribonucleoprotein</keyword>
<keyword id="KW-0689">Ribosomal protein</keyword>
<keyword id="KW-0694">RNA-binding</keyword>
<keyword id="KW-0699">rRNA-binding</keyword>
<keyword id="KW-0820">tRNA-binding</keyword>
<name>RS7_ALIF1</name>
<proteinExistence type="inferred from homology"/>
<reference key="1">
    <citation type="journal article" date="2005" name="Proc. Natl. Acad. Sci. U.S.A.">
        <title>Complete genome sequence of Vibrio fischeri: a symbiotic bacterium with pathogenic congeners.</title>
        <authorList>
            <person name="Ruby E.G."/>
            <person name="Urbanowski M."/>
            <person name="Campbell J."/>
            <person name="Dunn A."/>
            <person name="Faini M."/>
            <person name="Gunsalus R."/>
            <person name="Lostroh P."/>
            <person name="Lupp C."/>
            <person name="McCann J."/>
            <person name="Millikan D."/>
            <person name="Schaefer A."/>
            <person name="Stabb E."/>
            <person name="Stevens A."/>
            <person name="Visick K."/>
            <person name="Whistler C."/>
            <person name="Greenberg E.P."/>
        </authorList>
    </citation>
    <scope>NUCLEOTIDE SEQUENCE [LARGE SCALE GENOMIC DNA]</scope>
    <source>
        <strain>ATCC 700601 / ES114</strain>
    </source>
</reference>
<organism>
    <name type="scientific">Aliivibrio fischeri (strain ATCC 700601 / ES114)</name>
    <name type="common">Vibrio fischeri</name>
    <dbReference type="NCBI Taxonomy" id="312309"/>
    <lineage>
        <taxon>Bacteria</taxon>
        <taxon>Pseudomonadati</taxon>
        <taxon>Pseudomonadota</taxon>
        <taxon>Gammaproteobacteria</taxon>
        <taxon>Vibrionales</taxon>
        <taxon>Vibrionaceae</taxon>
        <taxon>Aliivibrio</taxon>
    </lineage>
</organism>
<accession>Q5E8C0</accession>
<sequence>MPRRRVIGQRKILPDPKFKSELLAKFVNIVMVDGKKSTAEKIVYGALDLMAEKSGKDHLAVFEEALENVRPAVEVKSRRVGGSTYQVPVEVRPVRRNALAMRWMVEAARKRGEKSMAQRLANEMLDASENKGTAVKKREDVHRMADANKAFAHYRW</sequence>
<evidence type="ECO:0000255" key="1">
    <source>
        <dbReference type="HAMAP-Rule" id="MF_00480"/>
    </source>
</evidence>
<evidence type="ECO:0000305" key="2"/>
<dbReference type="EMBL" id="CP000020">
    <property type="protein sequence ID" value="AAW84726.1"/>
    <property type="molecule type" value="Genomic_DNA"/>
</dbReference>
<dbReference type="RefSeq" id="WP_005417210.1">
    <property type="nucleotide sequence ID" value="NZ_CAWLES010000001.1"/>
</dbReference>
<dbReference type="RefSeq" id="YP_203614.1">
    <property type="nucleotide sequence ID" value="NC_006840.2"/>
</dbReference>
<dbReference type="SMR" id="Q5E8C0"/>
<dbReference type="STRING" id="312309.VF_0231"/>
<dbReference type="EnsemblBacteria" id="AAW84726">
    <property type="protein sequence ID" value="AAW84726"/>
    <property type="gene ID" value="VF_0231"/>
</dbReference>
<dbReference type="GeneID" id="54162854"/>
<dbReference type="KEGG" id="vfi:VF_0231"/>
<dbReference type="PATRIC" id="fig|312309.11.peg.228"/>
<dbReference type="eggNOG" id="COG0049">
    <property type="taxonomic scope" value="Bacteria"/>
</dbReference>
<dbReference type="HOGENOM" id="CLU_072226_1_1_6"/>
<dbReference type="OrthoDB" id="9807653at2"/>
<dbReference type="Proteomes" id="UP000000537">
    <property type="component" value="Chromosome I"/>
</dbReference>
<dbReference type="GO" id="GO:0015935">
    <property type="term" value="C:small ribosomal subunit"/>
    <property type="evidence" value="ECO:0007669"/>
    <property type="project" value="InterPro"/>
</dbReference>
<dbReference type="GO" id="GO:0019843">
    <property type="term" value="F:rRNA binding"/>
    <property type="evidence" value="ECO:0007669"/>
    <property type="project" value="UniProtKB-UniRule"/>
</dbReference>
<dbReference type="GO" id="GO:0003735">
    <property type="term" value="F:structural constituent of ribosome"/>
    <property type="evidence" value="ECO:0007669"/>
    <property type="project" value="InterPro"/>
</dbReference>
<dbReference type="GO" id="GO:0000049">
    <property type="term" value="F:tRNA binding"/>
    <property type="evidence" value="ECO:0007669"/>
    <property type="project" value="UniProtKB-UniRule"/>
</dbReference>
<dbReference type="GO" id="GO:0006412">
    <property type="term" value="P:translation"/>
    <property type="evidence" value="ECO:0007669"/>
    <property type="project" value="UniProtKB-UniRule"/>
</dbReference>
<dbReference type="CDD" id="cd14869">
    <property type="entry name" value="uS7_Bacteria"/>
    <property type="match status" value="1"/>
</dbReference>
<dbReference type="FunFam" id="1.10.455.10:FF:000001">
    <property type="entry name" value="30S ribosomal protein S7"/>
    <property type="match status" value="1"/>
</dbReference>
<dbReference type="Gene3D" id="1.10.455.10">
    <property type="entry name" value="Ribosomal protein S7 domain"/>
    <property type="match status" value="1"/>
</dbReference>
<dbReference type="HAMAP" id="MF_00480_B">
    <property type="entry name" value="Ribosomal_uS7_B"/>
    <property type="match status" value="1"/>
</dbReference>
<dbReference type="InterPro" id="IPR000235">
    <property type="entry name" value="Ribosomal_uS7"/>
</dbReference>
<dbReference type="InterPro" id="IPR005717">
    <property type="entry name" value="Ribosomal_uS7_bac/org-type"/>
</dbReference>
<dbReference type="InterPro" id="IPR020606">
    <property type="entry name" value="Ribosomal_uS7_CS"/>
</dbReference>
<dbReference type="InterPro" id="IPR023798">
    <property type="entry name" value="Ribosomal_uS7_dom"/>
</dbReference>
<dbReference type="InterPro" id="IPR036823">
    <property type="entry name" value="Ribosomal_uS7_dom_sf"/>
</dbReference>
<dbReference type="NCBIfam" id="TIGR01029">
    <property type="entry name" value="rpsG_bact"/>
    <property type="match status" value="1"/>
</dbReference>
<dbReference type="PANTHER" id="PTHR11205">
    <property type="entry name" value="RIBOSOMAL PROTEIN S7"/>
    <property type="match status" value="1"/>
</dbReference>
<dbReference type="Pfam" id="PF00177">
    <property type="entry name" value="Ribosomal_S7"/>
    <property type="match status" value="1"/>
</dbReference>
<dbReference type="PIRSF" id="PIRSF002122">
    <property type="entry name" value="RPS7p_RPS7a_RPS5e_RPS7o"/>
    <property type="match status" value="1"/>
</dbReference>
<dbReference type="SUPFAM" id="SSF47973">
    <property type="entry name" value="Ribosomal protein S7"/>
    <property type="match status" value="1"/>
</dbReference>
<dbReference type="PROSITE" id="PS00052">
    <property type="entry name" value="RIBOSOMAL_S7"/>
    <property type="match status" value="1"/>
</dbReference>
<protein>
    <recommendedName>
        <fullName evidence="1">Small ribosomal subunit protein uS7</fullName>
    </recommendedName>
    <alternativeName>
        <fullName evidence="2">30S ribosomal protein S7</fullName>
    </alternativeName>
</protein>
<comment type="function">
    <text evidence="1">One of the primary rRNA binding proteins, it binds directly to 16S rRNA where it nucleates assembly of the head domain of the 30S subunit. Is located at the subunit interface close to the decoding center, probably blocks exit of the E-site tRNA.</text>
</comment>
<comment type="subunit">
    <text evidence="1">Part of the 30S ribosomal subunit. Contacts proteins S9 and S11.</text>
</comment>
<comment type="similarity">
    <text evidence="1">Belongs to the universal ribosomal protein uS7 family.</text>
</comment>
<feature type="chain" id="PRO_0000226538" description="Small ribosomal subunit protein uS7">
    <location>
        <begin position="1"/>
        <end position="156"/>
    </location>
</feature>
<gene>
    <name evidence="1" type="primary">rpsG</name>
    <name type="ordered locus">VF_0231</name>
</gene>